<reference key="1">
    <citation type="journal article" date="2003" name="Genome Res.">
        <title>Genome sequence of an M3 strain of Streptococcus pyogenes reveals a large-scale genomic rearrangement in invasive strains and new insights into phage evolution.</title>
        <authorList>
            <person name="Nakagawa I."/>
            <person name="Kurokawa K."/>
            <person name="Yamashita A."/>
            <person name="Nakata M."/>
            <person name="Tomiyasu Y."/>
            <person name="Okahashi N."/>
            <person name="Kawabata S."/>
            <person name="Yamazaki K."/>
            <person name="Shiba T."/>
            <person name="Yasunaga T."/>
            <person name="Hayashi H."/>
            <person name="Hattori M."/>
            <person name="Hamada S."/>
        </authorList>
    </citation>
    <scope>NUCLEOTIDE SEQUENCE [LARGE SCALE GENOMIC DNA]</scope>
    <source>
        <strain>SSI-1</strain>
    </source>
</reference>
<dbReference type="EMBL" id="BA000034">
    <property type="protein sequence ID" value="BAC63155.1"/>
    <property type="molecule type" value="Genomic_DNA"/>
</dbReference>
<dbReference type="RefSeq" id="WP_002986624.1">
    <property type="nucleotide sequence ID" value="NC_004606.1"/>
</dbReference>
<dbReference type="SMR" id="P0DE37"/>
<dbReference type="GeneID" id="69900044"/>
<dbReference type="KEGG" id="sps:SPs0060"/>
<dbReference type="HOGENOM" id="CLU_131047_2_1_9"/>
<dbReference type="GO" id="GO:0022625">
    <property type="term" value="C:cytosolic large ribosomal subunit"/>
    <property type="evidence" value="ECO:0007669"/>
    <property type="project" value="TreeGrafter"/>
</dbReference>
<dbReference type="GO" id="GO:0003735">
    <property type="term" value="F:structural constituent of ribosome"/>
    <property type="evidence" value="ECO:0007669"/>
    <property type="project" value="InterPro"/>
</dbReference>
<dbReference type="GO" id="GO:0006412">
    <property type="term" value="P:translation"/>
    <property type="evidence" value="ECO:0007669"/>
    <property type="project" value="UniProtKB-UniRule"/>
</dbReference>
<dbReference type="CDD" id="cd01658">
    <property type="entry name" value="Ribosomal_L30"/>
    <property type="match status" value="1"/>
</dbReference>
<dbReference type="FunFam" id="3.30.1390.20:FF:000001">
    <property type="entry name" value="50S ribosomal protein L30"/>
    <property type="match status" value="1"/>
</dbReference>
<dbReference type="Gene3D" id="3.30.1390.20">
    <property type="entry name" value="Ribosomal protein L30, ferredoxin-like fold domain"/>
    <property type="match status" value="1"/>
</dbReference>
<dbReference type="HAMAP" id="MF_01371_B">
    <property type="entry name" value="Ribosomal_uL30_B"/>
    <property type="match status" value="1"/>
</dbReference>
<dbReference type="InterPro" id="IPR036919">
    <property type="entry name" value="Ribo_uL30_ferredoxin-like_sf"/>
</dbReference>
<dbReference type="InterPro" id="IPR005996">
    <property type="entry name" value="Ribosomal_uL30_bac-type"/>
</dbReference>
<dbReference type="InterPro" id="IPR018038">
    <property type="entry name" value="Ribosomal_uL30_CS"/>
</dbReference>
<dbReference type="InterPro" id="IPR016082">
    <property type="entry name" value="Ribosomal_uL30_ferredoxin-like"/>
</dbReference>
<dbReference type="NCBIfam" id="TIGR01308">
    <property type="entry name" value="rpmD_bact"/>
    <property type="match status" value="1"/>
</dbReference>
<dbReference type="PANTHER" id="PTHR15892:SF2">
    <property type="entry name" value="LARGE RIBOSOMAL SUBUNIT PROTEIN UL30M"/>
    <property type="match status" value="1"/>
</dbReference>
<dbReference type="PANTHER" id="PTHR15892">
    <property type="entry name" value="MITOCHONDRIAL RIBOSOMAL PROTEIN L30"/>
    <property type="match status" value="1"/>
</dbReference>
<dbReference type="Pfam" id="PF00327">
    <property type="entry name" value="Ribosomal_L30"/>
    <property type="match status" value="1"/>
</dbReference>
<dbReference type="PIRSF" id="PIRSF002211">
    <property type="entry name" value="Ribosomal_L30_bac-type"/>
    <property type="match status" value="1"/>
</dbReference>
<dbReference type="SUPFAM" id="SSF55129">
    <property type="entry name" value="Ribosomal protein L30p/L7e"/>
    <property type="match status" value="1"/>
</dbReference>
<dbReference type="PROSITE" id="PS00634">
    <property type="entry name" value="RIBOSOMAL_L30"/>
    <property type="match status" value="1"/>
</dbReference>
<protein>
    <recommendedName>
        <fullName evidence="1">Large ribosomal subunit protein uL30</fullName>
    </recommendedName>
    <alternativeName>
        <fullName evidence="2">50S ribosomal protein L30</fullName>
    </alternativeName>
</protein>
<keyword id="KW-0687">Ribonucleoprotein</keyword>
<keyword id="KW-0689">Ribosomal protein</keyword>
<name>RL30_STRPQ</name>
<accession>P0DE37</accession>
<accession>Q79YR2</accession>
<accession>Q7CFK5</accession>
<proteinExistence type="inferred from homology"/>
<sequence length="60" mass="6442">MAQIKITLTKSPIGRKPEQRKTVVALGLGKLNSSVVKEDNAAIRGMVTAISHLVTVEDVK</sequence>
<comment type="subunit">
    <text evidence="1">Part of the 50S ribosomal subunit.</text>
</comment>
<comment type="similarity">
    <text evidence="1">Belongs to the universal ribosomal protein uL30 family.</text>
</comment>
<gene>
    <name evidence="1" type="primary">rpmD</name>
    <name type="ordered locus">SPs0060</name>
</gene>
<evidence type="ECO:0000255" key="1">
    <source>
        <dbReference type="HAMAP-Rule" id="MF_01371"/>
    </source>
</evidence>
<evidence type="ECO:0000305" key="2"/>
<feature type="chain" id="PRO_0000411508" description="Large ribosomal subunit protein uL30">
    <location>
        <begin position="1"/>
        <end position="60"/>
    </location>
</feature>
<organism>
    <name type="scientific">Streptococcus pyogenes serotype M3 (strain SSI-1)</name>
    <dbReference type="NCBI Taxonomy" id="193567"/>
    <lineage>
        <taxon>Bacteria</taxon>
        <taxon>Bacillati</taxon>
        <taxon>Bacillota</taxon>
        <taxon>Bacilli</taxon>
        <taxon>Lactobacillales</taxon>
        <taxon>Streptococcaceae</taxon>
        <taxon>Streptococcus</taxon>
    </lineage>
</organism>